<gene>
    <name evidence="1" type="primary">rpmB</name>
    <name type="ordered locus">LBUL_1299</name>
</gene>
<proteinExistence type="inferred from homology"/>
<keyword id="KW-0687">Ribonucleoprotein</keyword>
<keyword id="KW-0689">Ribosomal protein</keyword>
<accession>Q049Q0</accession>
<dbReference type="EMBL" id="CP000412">
    <property type="protein sequence ID" value="ABJ58822.1"/>
    <property type="molecule type" value="Genomic_DNA"/>
</dbReference>
<dbReference type="RefSeq" id="WP_003615500.1">
    <property type="nucleotide sequence ID" value="NC_008529.1"/>
</dbReference>
<dbReference type="SMR" id="Q049Q0"/>
<dbReference type="KEGG" id="lbu:LBUL_1299"/>
<dbReference type="HOGENOM" id="CLU_064548_7_1_9"/>
<dbReference type="BioCyc" id="LDEL321956:LBUL_RS10170-MONOMER"/>
<dbReference type="GO" id="GO:1990904">
    <property type="term" value="C:ribonucleoprotein complex"/>
    <property type="evidence" value="ECO:0007669"/>
    <property type="project" value="UniProtKB-KW"/>
</dbReference>
<dbReference type="GO" id="GO:0005840">
    <property type="term" value="C:ribosome"/>
    <property type="evidence" value="ECO:0007669"/>
    <property type="project" value="UniProtKB-KW"/>
</dbReference>
<dbReference type="GO" id="GO:0003735">
    <property type="term" value="F:structural constituent of ribosome"/>
    <property type="evidence" value="ECO:0007669"/>
    <property type="project" value="InterPro"/>
</dbReference>
<dbReference type="GO" id="GO:0006412">
    <property type="term" value="P:translation"/>
    <property type="evidence" value="ECO:0007669"/>
    <property type="project" value="UniProtKB-UniRule"/>
</dbReference>
<dbReference type="Gene3D" id="2.30.170.40">
    <property type="entry name" value="Ribosomal protein L28/L24"/>
    <property type="match status" value="1"/>
</dbReference>
<dbReference type="HAMAP" id="MF_00373">
    <property type="entry name" value="Ribosomal_bL28"/>
    <property type="match status" value="1"/>
</dbReference>
<dbReference type="InterPro" id="IPR050096">
    <property type="entry name" value="Bacterial_rp_bL28"/>
</dbReference>
<dbReference type="InterPro" id="IPR026569">
    <property type="entry name" value="Ribosomal_bL28"/>
</dbReference>
<dbReference type="InterPro" id="IPR034704">
    <property type="entry name" value="Ribosomal_bL28/bL31-like_sf"/>
</dbReference>
<dbReference type="InterPro" id="IPR001383">
    <property type="entry name" value="Ribosomal_bL28_bact-type"/>
</dbReference>
<dbReference type="InterPro" id="IPR037147">
    <property type="entry name" value="Ribosomal_bL28_sf"/>
</dbReference>
<dbReference type="NCBIfam" id="TIGR00009">
    <property type="entry name" value="L28"/>
    <property type="match status" value="1"/>
</dbReference>
<dbReference type="PANTHER" id="PTHR39080">
    <property type="entry name" value="50S RIBOSOMAL PROTEIN L28"/>
    <property type="match status" value="1"/>
</dbReference>
<dbReference type="PANTHER" id="PTHR39080:SF1">
    <property type="entry name" value="LARGE RIBOSOMAL SUBUNIT PROTEIN BL28A"/>
    <property type="match status" value="1"/>
</dbReference>
<dbReference type="Pfam" id="PF00830">
    <property type="entry name" value="Ribosomal_L28"/>
    <property type="match status" value="1"/>
</dbReference>
<dbReference type="SUPFAM" id="SSF143800">
    <property type="entry name" value="L28p-like"/>
    <property type="match status" value="1"/>
</dbReference>
<sequence length="61" mass="6857">MAKDFVTGKKTTFGNTRSHALNSSSRSWKPNLQKVRILVNGKPKRVWVSTKTLKSGKVTRV</sequence>
<organism>
    <name type="scientific">Lactobacillus delbrueckii subsp. bulgaricus (strain ATCC BAA-365 / Lb-18)</name>
    <dbReference type="NCBI Taxonomy" id="321956"/>
    <lineage>
        <taxon>Bacteria</taxon>
        <taxon>Bacillati</taxon>
        <taxon>Bacillota</taxon>
        <taxon>Bacilli</taxon>
        <taxon>Lactobacillales</taxon>
        <taxon>Lactobacillaceae</taxon>
        <taxon>Lactobacillus</taxon>
    </lineage>
</organism>
<name>RL28_LACDB</name>
<feature type="chain" id="PRO_1000007261" description="Large ribosomal subunit protein bL28">
    <location>
        <begin position="1"/>
        <end position="61"/>
    </location>
</feature>
<feature type="region of interest" description="Disordered" evidence="2">
    <location>
        <begin position="1"/>
        <end position="27"/>
    </location>
</feature>
<feature type="compositionally biased region" description="Polar residues" evidence="2">
    <location>
        <begin position="9"/>
        <end position="27"/>
    </location>
</feature>
<comment type="similarity">
    <text evidence="1">Belongs to the bacterial ribosomal protein bL28 family.</text>
</comment>
<protein>
    <recommendedName>
        <fullName evidence="1">Large ribosomal subunit protein bL28</fullName>
    </recommendedName>
    <alternativeName>
        <fullName evidence="3">50S ribosomal protein L28</fullName>
    </alternativeName>
</protein>
<evidence type="ECO:0000255" key="1">
    <source>
        <dbReference type="HAMAP-Rule" id="MF_00373"/>
    </source>
</evidence>
<evidence type="ECO:0000256" key="2">
    <source>
        <dbReference type="SAM" id="MobiDB-lite"/>
    </source>
</evidence>
<evidence type="ECO:0000305" key="3"/>
<reference key="1">
    <citation type="journal article" date="2006" name="Proc. Natl. Acad. Sci. U.S.A.">
        <title>Comparative genomics of the lactic acid bacteria.</title>
        <authorList>
            <person name="Makarova K.S."/>
            <person name="Slesarev A."/>
            <person name="Wolf Y.I."/>
            <person name="Sorokin A."/>
            <person name="Mirkin B."/>
            <person name="Koonin E.V."/>
            <person name="Pavlov A."/>
            <person name="Pavlova N."/>
            <person name="Karamychev V."/>
            <person name="Polouchine N."/>
            <person name="Shakhova V."/>
            <person name="Grigoriev I."/>
            <person name="Lou Y."/>
            <person name="Rohksar D."/>
            <person name="Lucas S."/>
            <person name="Huang K."/>
            <person name="Goodstein D.M."/>
            <person name="Hawkins T."/>
            <person name="Plengvidhya V."/>
            <person name="Welker D."/>
            <person name="Hughes J."/>
            <person name="Goh Y."/>
            <person name="Benson A."/>
            <person name="Baldwin K."/>
            <person name="Lee J.-H."/>
            <person name="Diaz-Muniz I."/>
            <person name="Dosti B."/>
            <person name="Smeianov V."/>
            <person name="Wechter W."/>
            <person name="Barabote R."/>
            <person name="Lorca G."/>
            <person name="Altermann E."/>
            <person name="Barrangou R."/>
            <person name="Ganesan B."/>
            <person name="Xie Y."/>
            <person name="Rawsthorne H."/>
            <person name="Tamir D."/>
            <person name="Parker C."/>
            <person name="Breidt F."/>
            <person name="Broadbent J.R."/>
            <person name="Hutkins R."/>
            <person name="O'Sullivan D."/>
            <person name="Steele J."/>
            <person name="Unlu G."/>
            <person name="Saier M.H. Jr."/>
            <person name="Klaenhammer T."/>
            <person name="Richardson P."/>
            <person name="Kozyavkin S."/>
            <person name="Weimer B.C."/>
            <person name="Mills D.A."/>
        </authorList>
    </citation>
    <scope>NUCLEOTIDE SEQUENCE [LARGE SCALE GENOMIC DNA]</scope>
    <source>
        <strain>ATCC BAA-365 / Lb-18</strain>
    </source>
</reference>